<protein>
    <recommendedName>
        <fullName>Probable sodium/metabolite cotransporter BASS4, chloroplastic</fullName>
    </recommendedName>
    <alternativeName>
        <fullName>Bile acid-sodium symporter family protein 4</fullName>
    </alternativeName>
</protein>
<name>BASS4_ORYSJ</name>
<sequence length="423" mass="44483">MVTTHHLCLLRSTVLSVPVRLRAPRAPPHPRLPTASASASSYHGPTHLRRLRPLRAAAAAAGGASPDGADGAKRPAPAAASSSLGAALVGFARSNFLPLALIAGIALALMDPTLGCLAHKYSLSKYSTFGIFLISGLTLRTKELGAALEAWPAGLFGLASILLFTPFLAQFIMQIKFFPHEFITGLAMFCCMPTTLSSGVTLTQLVGGNTALALAMTAISNLLGIMIVPLSLAKYIGVGAGVSLPTEKLFKSLVTTLLIPIILGKVARETSKGIAGFVDGNKQGFSVTSAILLSLVPWIQVSRSRSLLLSVQPKAFAVAVTVGVLLHFALLAFNAAALHILSRLEQRGVSVFARNEYARAVILVASQKTLPVLVAVVEQLGGALGESGLLVIPCVAAHINQIIIDSIIVNWWRQRDQQFANAK</sequence>
<accession>Q6ESG1</accession>
<accession>A0A0P0VJW2</accession>
<feature type="transit peptide" description="Chloroplast" evidence="2">
    <location>
        <begin position="1"/>
        <end position="55"/>
    </location>
</feature>
<feature type="chain" id="PRO_0000418611" description="Probable sodium/metabolite cotransporter BASS4, chloroplastic">
    <location>
        <begin position="56"/>
        <end position="423"/>
    </location>
</feature>
<feature type="transmembrane region" description="Helical" evidence="2">
    <location>
        <begin position="96"/>
        <end position="116"/>
    </location>
</feature>
<feature type="transmembrane region" description="Helical" evidence="2">
    <location>
        <begin position="123"/>
        <end position="140"/>
    </location>
</feature>
<feature type="transmembrane region" description="Helical" evidence="2">
    <location>
        <begin position="153"/>
        <end position="173"/>
    </location>
</feature>
<feature type="transmembrane region" description="Helical" evidence="2">
    <location>
        <begin position="182"/>
        <end position="202"/>
    </location>
</feature>
<feature type="transmembrane region" description="Helical" evidence="2">
    <location>
        <begin position="212"/>
        <end position="232"/>
    </location>
</feature>
<feature type="transmembrane region" description="Helical" evidence="2">
    <location>
        <begin position="244"/>
        <end position="264"/>
    </location>
</feature>
<feature type="transmembrane region" description="Helical" evidence="2">
    <location>
        <begin position="284"/>
        <end position="301"/>
    </location>
</feature>
<feature type="transmembrane region" description="Helical" evidence="2">
    <location>
        <begin position="315"/>
        <end position="335"/>
    </location>
</feature>
<feature type="transmembrane region" description="Helical" evidence="2">
    <location>
        <begin position="389"/>
        <end position="409"/>
    </location>
</feature>
<feature type="region of interest" description="Disordered" evidence="3">
    <location>
        <begin position="23"/>
        <end position="45"/>
    </location>
</feature>
<proteinExistence type="inferred from homology"/>
<evidence type="ECO:0000250" key="1"/>
<evidence type="ECO:0000255" key="2"/>
<evidence type="ECO:0000256" key="3">
    <source>
        <dbReference type="SAM" id="MobiDB-lite"/>
    </source>
</evidence>
<evidence type="ECO:0000305" key="4"/>
<reference key="1">
    <citation type="journal article" date="2005" name="Nature">
        <title>The map-based sequence of the rice genome.</title>
        <authorList>
            <consortium name="International rice genome sequencing project (IRGSP)"/>
        </authorList>
    </citation>
    <scope>NUCLEOTIDE SEQUENCE [LARGE SCALE GENOMIC DNA]</scope>
    <source>
        <strain>cv. Nipponbare</strain>
    </source>
</reference>
<reference key="2">
    <citation type="journal article" date="2008" name="Nucleic Acids Res.">
        <title>The rice annotation project database (RAP-DB): 2008 update.</title>
        <authorList>
            <consortium name="The rice annotation project (RAP)"/>
        </authorList>
    </citation>
    <scope>GENOME REANNOTATION</scope>
    <source>
        <strain>cv. Nipponbare</strain>
    </source>
</reference>
<reference key="3">
    <citation type="journal article" date="2013" name="Rice">
        <title>Improvement of the Oryza sativa Nipponbare reference genome using next generation sequence and optical map data.</title>
        <authorList>
            <person name="Kawahara Y."/>
            <person name="de la Bastide M."/>
            <person name="Hamilton J.P."/>
            <person name="Kanamori H."/>
            <person name="McCombie W.R."/>
            <person name="Ouyang S."/>
            <person name="Schwartz D.C."/>
            <person name="Tanaka T."/>
            <person name="Wu J."/>
            <person name="Zhou S."/>
            <person name="Childs K.L."/>
            <person name="Davidson R.M."/>
            <person name="Lin H."/>
            <person name="Quesada-Ocampo L."/>
            <person name="Vaillancourt B."/>
            <person name="Sakai H."/>
            <person name="Lee S.S."/>
            <person name="Kim J."/>
            <person name="Numa H."/>
            <person name="Itoh T."/>
            <person name="Buell C.R."/>
            <person name="Matsumoto T."/>
        </authorList>
    </citation>
    <scope>GENOME REANNOTATION</scope>
    <source>
        <strain>cv. Nipponbare</strain>
    </source>
</reference>
<reference key="4">
    <citation type="journal article" date="2005" name="PLoS Biol.">
        <title>The genomes of Oryza sativa: a history of duplications.</title>
        <authorList>
            <person name="Yu J."/>
            <person name="Wang J."/>
            <person name="Lin W."/>
            <person name="Li S."/>
            <person name="Li H."/>
            <person name="Zhou J."/>
            <person name="Ni P."/>
            <person name="Dong W."/>
            <person name="Hu S."/>
            <person name="Zeng C."/>
            <person name="Zhang J."/>
            <person name="Zhang Y."/>
            <person name="Li R."/>
            <person name="Xu Z."/>
            <person name="Li S."/>
            <person name="Li X."/>
            <person name="Zheng H."/>
            <person name="Cong L."/>
            <person name="Lin L."/>
            <person name="Yin J."/>
            <person name="Geng J."/>
            <person name="Li G."/>
            <person name="Shi J."/>
            <person name="Liu J."/>
            <person name="Lv H."/>
            <person name="Li J."/>
            <person name="Wang J."/>
            <person name="Deng Y."/>
            <person name="Ran L."/>
            <person name="Shi X."/>
            <person name="Wang X."/>
            <person name="Wu Q."/>
            <person name="Li C."/>
            <person name="Ren X."/>
            <person name="Wang J."/>
            <person name="Wang X."/>
            <person name="Li D."/>
            <person name="Liu D."/>
            <person name="Zhang X."/>
            <person name="Ji Z."/>
            <person name="Zhao W."/>
            <person name="Sun Y."/>
            <person name="Zhang Z."/>
            <person name="Bao J."/>
            <person name="Han Y."/>
            <person name="Dong L."/>
            <person name="Ji J."/>
            <person name="Chen P."/>
            <person name="Wu S."/>
            <person name="Liu J."/>
            <person name="Xiao Y."/>
            <person name="Bu D."/>
            <person name="Tan J."/>
            <person name="Yang L."/>
            <person name="Ye C."/>
            <person name="Zhang J."/>
            <person name="Xu J."/>
            <person name="Zhou Y."/>
            <person name="Yu Y."/>
            <person name="Zhang B."/>
            <person name="Zhuang S."/>
            <person name="Wei H."/>
            <person name="Liu B."/>
            <person name="Lei M."/>
            <person name="Yu H."/>
            <person name="Li Y."/>
            <person name="Xu H."/>
            <person name="Wei S."/>
            <person name="He X."/>
            <person name="Fang L."/>
            <person name="Zhang Z."/>
            <person name="Zhang Y."/>
            <person name="Huang X."/>
            <person name="Su Z."/>
            <person name="Tong W."/>
            <person name="Li J."/>
            <person name="Tong Z."/>
            <person name="Li S."/>
            <person name="Ye J."/>
            <person name="Wang L."/>
            <person name="Fang L."/>
            <person name="Lei T."/>
            <person name="Chen C.-S."/>
            <person name="Chen H.-C."/>
            <person name="Xu Z."/>
            <person name="Li H."/>
            <person name="Huang H."/>
            <person name="Zhang F."/>
            <person name="Xu H."/>
            <person name="Li N."/>
            <person name="Zhao C."/>
            <person name="Li S."/>
            <person name="Dong L."/>
            <person name="Huang Y."/>
            <person name="Li L."/>
            <person name="Xi Y."/>
            <person name="Qi Q."/>
            <person name="Li W."/>
            <person name="Zhang B."/>
            <person name="Hu W."/>
            <person name="Zhang Y."/>
            <person name="Tian X."/>
            <person name="Jiao Y."/>
            <person name="Liang X."/>
            <person name="Jin J."/>
            <person name="Gao L."/>
            <person name="Zheng W."/>
            <person name="Hao B."/>
            <person name="Liu S.-M."/>
            <person name="Wang W."/>
            <person name="Yuan L."/>
            <person name="Cao M."/>
            <person name="McDermott J."/>
            <person name="Samudrala R."/>
            <person name="Wang J."/>
            <person name="Wong G.K.-S."/>
            <person name="Yang H."/>
        </authorList>
    </citation>
    <scope>NUCLEOTIDE SEQUENCE [LARGE SCALE GENOMIC DNA]</scope>
    <source>
        <strain>cv. Nipponbare</strain>
    </source>
</reference>
<organism>
    <name type="scientific">Oryza sativa subsp. japonica</name>
    <name type="common">Rice</name>
    <dbReference type="NCBI Taxonomy" id="39947"/>
    <lineage>
        <taxon>Eukaryota</taxon>
        <taxon>Viridiplantae</taxon>
        <taxon>Streptophyta</taxon>
        <taxon>Embryophyta</taxon>
        <taxon>Tracheophyta</taxon>
        <taxon>Spermatophyta</taxon>
        <taxon>Magnoliopsida</taxon>
        <taxon>Liliopsida</taxon>
        <taxon>Poales</taxon>
        <taxon>Poaceae</taxon>
        <taxon>BOP clade</taxon>
        <taxon>Oryzoideae</taxon>
        <taxon>Oryzeae</taxon>
        <taxon>Oryzinae</taxon>
        <taxon>Oryza</taxon>
        <taxon>Oryza sativa</taxon>
    </lineage>
</organism>
<keyword id="KW-0150">Chloroplast</keyword>
<keyword id="KW-0472">Membrane</keyword>
<keyword id="KW-0934">Plastid</keyword>
<keyword id="KW-1185">Reference proteome</keyword>
<keyword id="KW-0809">Transit peptide</keyword>
<keyword id="KW-0812">Transmembrane</keyword>
<keyword id="KW-1133">Transmembrane helix</keyword>
<keyword id="KW-0813">Transport</keyword>
<gene>
    <name type="primary">BASS4</name>
    <name type="ordered locus">Os02g0531200</name>
    <name type="ordered locus">LOC_Os02g32930</name>
    <name type="ORF">OsJ_06999</name>
    <name type="ORF">P0605D08.11</name>
</gene>
<comment type="function">
    <text evidence="1">May function as sodium-coupled metabolite transporter across the chloroplast envelope.</text>
</comment>
<comment type="subcellular location">
    <subcellularLocation>
        <location evidence="4">Membrane</location>
        <topology evidence="4">Multi-pass membrane protein</topology>
    </subcellularLocation>
    <subcellularLocation>
        <location evidence="4">Plastid</location>
        <location evidence="4">Chloroplast envelope</location>
    </subcellularLocation>
</comment>
<comment type="similarity">
    <text evidence="4">Belongs to the bile acid:sodium symporter (BASS) (TC 2.A.28) family.</text>
</comment>
<dbReference type="EMBL" id="AP005110">
    <property type="protein sequence ID" value="BAD28409.1"/>
    <property type="molecule type" value="Genomic_DNA"/>
</dbReference>
<dbReference type="EMBL" id="AP008208">
    <property type="protein sequence ID" value="BAF08937.1"/>
    <property type="molecule type" value="Genomic_DNA"/>
</dbReference>
<dbReference type="EMBL" id="AP014958">
    <property type="protein sequence ID" value="BAS79034.1"/>
    <property type="molecule type" value="Genomic_DNA"/>
</dbReference>
<dbReference type="EMBL" id="CM000139">
    <property type="protein sequence ID" value="EEE57120.1"/>
    <property type="molecule type" value="Genomic_DNA"/>
</dbReference>
<dbReference type="RefSeq" id="XP_015623372.1">
    <property type="nucleotide sequence ID" value="XM_015767886.1"/>
</dbReference>
<dbReference type="SMR" id="Q6ESG1"/>
<dbReference type="FunCoup" id="Q6ESG1">
    <property type="interactions" value="739"/>
</dbReference>
<dbReference type="STRING" id="39947.Q6ESG1"/>
<dbReference type="PaxDb" id="39947-Q6ESG1"/>
<dbReference type="EnsemblPlants" id="Os02t0531200-01">
    <property type="protein sequence ID" value="Os02t0531200-01"/>
    <property type="gene ID" value="Os02g0531200"/>
</dbReference>
<dbReference type="Gramene" id="Os02t0531200-01">
    <property type="protein sequence ID" value="Os02t0531200-01"/>
    <property type="gene ID" value="Os02g0531200"/>
</dbReference>
<dbReference type="KEGG" id="dosa:Os02g0531200"/>
<dbReference type="eggNOG" id="KOG4821">
    <property type="taxonomic scope" value="Eukaryota"/>
</dbReference>
<dbReference type="HOGENOM" id="CLU_033952_0_1_1"/>
<dbReference type="InParanoid" id="Q6ESG1"/>
<dbReference type="OMA" id="LPIMIYH"/>
<dbReference type="OrthoDB" id="188035at2759"/>
<dbReference type="Proteomes" id="UP000000763">
    <property type="component" value="Chromosome 2"/>
</dbReference>
<dbReference type="Proteomes" id="UP000007752">
    <property type="component" value="Chromosome 2"/>
</dbReference>
<dbReference type="Proteomes" id="UP000059680">
    <property type="component" value="Chromosome 2"/>
</dbReference>
<dbReference type="GO" id="GO:0009941">
    <property type="term" value="C:chloroplast envelope"/>
    <property type="evidence" value="ECO:0007669"/>
    <property type="project" value="UniProtKB-SubCell"/>
</dbReference>
<dbReference type="GO" id="GO:0016020">
    <property type="term" value="C:membrane"/>
    <property type="evidence" value="ECO:0007669"/>
    <property type="project" value="UniProtKB-SubCell"/>
</dbReference>
<dbReference type="FunFam" id="1.20.1530.20:FF:000021">
    <property type="entry name" value="Probable sodium/metabolite cotransporter BASS4, chloroplastic"/>
    <property type="match status" value="1"/>
</dbReference>
<dbReference type="Gene3D" id="1.20.1530.20">
    <property type="match status" value="1"/>
</dbReference>
<dbReference type="InterPro" id="IPR038770">
    <property type="entry name" value="Na+/solute_symporter_sf"/>
</dbReference>
<dbReference type="InterPro" id="IPR016833">
    <property type="entry name" value="Put_Na-Bile_cotransptr"/>
</dbReference>
<dbReference type="PANTHER" id="PTHR18640:SF10">
    <property type="entry name" value="SODIUM_METABOLITE COTRANSPORTER BASS4, CHLOROPLASTIC-RELATED"/>
    <property type="match status" value="1"/>
</dbReference>
<dbReference type="PANTHER" id="PTHR18640">
    <property type="entry name" value="SOLUTE CARRIER FAMILY 10 MEMBER 7"/>
    <property type="match status" value="1"/>
</dbReference>
<dbReference type="Pfam" id="PF13593">
    <property type="entry name" value="SBF_like"/>
    <property type="match status" value="1"/>
</dbReference>